<dbReference type="EC" id="2.3.3.1"/>
<dbReference type="EMBL" id="DQ829807">
    <property type="protein sequence ID" value="ABI21881.1"/>
    <property type="molecule type" value="mRNA"/>
</dbReference>
<dbReference type="SMR" id="Q0GNE1"/>
<dbReference type="BRENDA" id="2.3.3.16">
    <property type="organism ID" value="9921"/>
</dbReference>
<dbReference type="UniPathway" id="UPA00223">
    <property type="reaction ID" value="UER00717"/>
</dbReference>
<dbReference type="GO" id="GO:0005759">
    <property type="term" value="C:mitochondrial matrix"/>
    <property type="evidence" value="ECO:0000250"/>
    <property type="project" value="UniProtKB"/>
</dbReference>
<dbReference type="GO" id="GO:0004108">
    <property type="term" value="F:citrate (Si)-synthase activity"/>
    <property type="evidence" value="ECO:0000250"/>
    <property type="project" value="UniProtKB"/>
</dbReference>
<dbReference type="GO" id="GO:0042802">
    <property type="term" value="F:identical protein binding"/>
    <property type="evidence" value="ECO:0000250"/>
    <property type="project" value="UniProtKB"/>
</dbReference>
<dbReference type="GO" id="GO:0005975">
    <property type="term" value="P:carbohydrate metabolic process"/>
    <property type="evidence" value="ECO:0000250"/>
    <property type="project" value="UniProtKB"/>
</dbReference>
<dbReference type="GO" id="GO:0006101">
    <property type="term" value="P:citrate metabolic process"/>
    <property type="evidence" value="ECO:0007669"/>
    <property type="project" value="InterPro"/>
</dbReference>
<dbReference type="GO" id="GO:0006099">
    <property type="term" value="P:tricarboxylic acid cycle"/>
    <property type="evidence" value="ECO:0007669"/>
    <property type="project" value="UniProtKB-UniPathway"/>
</dbReference>
<dbReference type="CDD" id="cd06105">
    <property type="entry name" value="ScCit1-2_like"/>
    <property type="match status" value="1"/>
</dbReference>
<dbReference type="FunFam" id="1.10.230.10:FF:000001">
    <property type="entry name" value="Citrate synthase"/>
    <property type="match status" value="1"/>
</dbReference>
<dbReference type="FunFam" id="1.10.580.10:FF:000001">
    <property type="entry name" value="Citrate synthase"/>
    <property type="match status" value="1"/>
</dbReference>
<dbReference type="Gene3D" id="1.10.580.10">
    <property type="entry name" value="Citrate Synthase, domain 1"/>
    <property type="match status" value="1"/>
</dbReference>
<dbReference type="Gene3D" id="1.10.230.10">
    <property type="entry name" value="Cytochrome P450-Terp, domain 2"/>
    <property type="match status" value="1"/>
</dbReference>
<dbReference type="InterPro" id="IPR016142">
    <property type="entry name" value="Citrate_synth-like_lrg_a-sub"/>
</dbReference>
<dbReference type="InterPro" id="IPR016143">
    <property type="entry name" value="Citrate_synth-like_sm_a-sub"/>
</dbReference>
<dbReference type="InterPro" id="IPR002020">
    <property type="entry name" value="Citrate_synthase"/>
</dbReference>
<dbReference type="InterPro" id="IPR019810">
    <property type="entry name" value="Citrate_synthase_AS"/>
</dbReference>
<dbReference type="InterPro" id="IPR010109">
    <property type="entry name" value="Citrate_synthase_euk"/>
</dbReference>
<dbReference type="InterPro" id="IPR036969">
    <property type="entry name" value="Citrate_synthase_sf"/>
</dbReference>
<dbReference type="NCBIfam" id="TIGR01793">
    <property type="entry name" value="cit_synth_euk"/>
    <property type="match status" value="1"/>
</dbReference>
<dbReference type="NCBIfam" id="NF007128">
    <property type="entry name" value="PRK09569.1"/>
    <property type="match status" value="1"/>
</dbReference>
<dbReference type="PANTHER" id="PTHR11739">
    <property type="entry name" value="CITRATE SYNTHASE"/>
    <property type="match status" value="1"/>
</dbReference>
<dbReference type="PANTHER" id="PTHR11739:SF29">
    <property type="entry name" value="CITRATE SYNTHASE"/>
    <property type="match status" value="1"/>
</dbReference>
<dbReference type="Pfam" id="PF00285">
    <property type="entry name" value="Citrate_synt"/>
    <property type="match status" value="1"/>
</dbReference>
<dbReference type="PRINTS" id="PR00143">
    <property type="entry name" value="CITRTSNTHASE"/>
</dbReference>
<dbReference type="SUPFAM" id="SSF48256">
    <property type="entry name" value="Citrate synthase"/>
    <property type="match status" value="1"/>
</dbReference>
<dbReference type="PROSITE" id="PS00480">
    <property type="entry name" value="CITRATE_SYNTHASE"/>
    <property type="match status" value="1"/>
</dbReference>
<organism>
    <name type="scientific">Amblyrhynchus cristatus</name>
    <name type="common">Galapagos marine iguana</name>
    <dbReference type="NCBI Taxonomy" id="51208"/>
    <lineage>
        <taxon>Eukaryota</taxon>
        <taxon>Metazoa</taxon>
        <taxon>Chordata</taxon>
        <taxon>Craniata</taxon>
        <taxon>Vertebrata</taxon>
        <taxon>Euteleostomi</taxon>
        <taxon>Lepidosauria</taxon>
        <taxon>Squamata</taxon>
        <taxon>Bifurcata</taxon>
        <taxon>Unidentata</taxon>
        <taxon>Episquamata</taxon>
        <taxon>Toxicofera</taxon>
        <taxon>Iguania</taxon>
        <taxon>Iguanidae</taxon>
        <taxon>Iguaninae</taxon>
        <taxon>Amblyrhynchus</taxon>
    </lineage>
</organism>
<name>CISY_AMBCR</name>
<comment type="function">
    <text evidence="5">Key enzyme of the Krebs tricarboxylic acid cycle which catalyzes the synthesis of citrate from acetyl coenzyme A and oxaloacetate.</text>
</comment>
<comment type="catalytic activity">
    <reaction evidence="4">
        <text>oxaloacetate + acetyl-CoA + H2O = citrate + CoA + H(+)</text>
        <dbReference type="Rhea" id="RHEA:16845"/>
        <dbReference type="ChEBI" id="CHEBI:15377"/>
        <dbReference type="ChEBI" id="CHEBI:15378"/>
        <dbReference type="ChEBI" id="CHEBI:16452"/>
        <dbReference type="ChEBI" id="CHEBI:16947"/>
        <dbReference type="ChEBI" id="CHEBI:57287"/>
        <dbReference type="ChEBI" id="CHEBI:57288"/>
        <dbReference type="EC" id="2.3.3.1"/>
    </reaction>
</comment>
<comment type="pathway">
    <text>Carbohydrate metabolism; tricarboxylic acid cycle; isocitrate from oxaloacetate: step 1/2.</text>
</comment>
<comment type="subunit">
    <text evidence="2">Homodimer.</text>
</comment>
<comment type="subcellular location">
    <subcellularLocation>
        <location evidence="3">Mitochondrion matrix</location>
    </subcellularLocation>
</comment>
<comment type="miscellaneous">
    <text>Citrate synthase is found in nearly all cells capable of oxidative metabolism.</text>
</comment>
<comment type="similarity">
    <text evidence="5">Belongs to the citrate synthase family.</text>
</comment>
<proteinExistence type="evidence at transcript level"/>
<gene>
    <name type="primary">CS</name>
</gene>
<sequence>MTLLTASSRAAARLLGAKNSSCIIFAARHASTSTNLKDVLANMIPKEQARIKSFRQQYGSTVIGQITVDMLYGGMRGMKGLIYETSVLDPDEGIRFRGYSIPECQKLLPKAPGGAEPLPEGLFWLLVTGEIPSQEQVNWVSREWAKRAALPSHVVTMLDNFPTNLHPMSQLSAAVTALNSESTFARAYSEGISRTKYWEFIYEDSMDLIAKLPCIAAKIYRNLYREGSSIGAIDPALDWSHNFTNMLGYTDTQFIELMRLYLTIHSDHEGGNVSAHTSHLVGSALSDPYLAFAAAMNGLAGPLHGLANQEVLVWLTNLQKELGEDVSDQKLRDFIWNTLNSGRVVPGYGHAVLRKTDPRYTCQREFALKHLPKDPLFKLVAQLYKIVPNVLLEQGKAKNPWPNVDAHSGVLLQYYGMKEMNYYTVLFGVSRALGVLSQLIWSRALGFPLERPKSMSTDGLMVLVGAKSV</sequence>
<reference key="1">
    <citation type="submission" date="2006-06" db="EMBL/GenBank/DDBJ databases">
        <title>Temperature adaptation in muscle-type lactate dehydrogenase and citrate synthase of Amblyrhynchus cristatus, the Galapagos marine iguana.</title>
        <authorList>
            <person name="Fields P.A."/>
            <person name="Strothers C.M."/>
        </authorList>
    </citation>
    <scope>NUCLEOTIDE SEQUENCE [MRNA]</scope>
</reference>
<keyword id="KW-0496">Mitochondrion</keyword>
<keyword id="KW-0808">Transferase</keyword>
<keyword id="KW-0809">Transit peptide</keyword>
<keyword id="KW-0816">Tricarboxylic acid cycle</keyword>
<evidence type="ECO:0000250" key="1"/>
<evidence type="ECO:0000250" key="2">
    <source>
        <dbReference type="UniProtKB" id="O75390"/>
    </source>
</evidence>
<evidence type="ECO:0000250" key="3">
    <source>
        <dbReference type="UniProtKB" id="P00889"/>
    </source>
</evidence>
<evidence type="ECO:0000255" key="4">
    <source>
        <dbReference type="PROSITE-ProRule" id="PRU10117"/>
    </source>
</evidence>
<evidence type="ECO:0000305" key="5"/>
<feature type="transit peptide" description="Mitochondrion" evidence="1">
    <location>
        <begin position="1"/>
        <end position="31"/>
    </location>
</feature>
<feature type="chain" id="PRO_0000253900" description="Citrate synthase, mitochondrial">
    <location>
        <begin position="32"/>
        <end position="469"/>
    </location>
</feature>
<feature type="active site" evidence="4">
    <location>
        <position position="304"/>
    </location>
</feature>
<feature type="active site" evidence="4">
    <location>
        <position position="350"/>
    </location>
</feature>
<feature type="active site" evidence="4">
    <location>
        <position position="405"/>
    </location>
</feature>
<feature type="binding site" description="in chain A" evidence="2">
    <location>
        <position position="359"/>
    </location>
    <ligand>
        <name>oxaloacetate</name>
        <dbReference type="ChEBI" id="CHEBI:16452"/>
        <note>ligand shared between homodimeric partners</note>
    </ligand>
</feature>
<feature type="binding site" description="in chain A" evidence="2">
    <location>
        <position position="431"/>
    </location>
    <ligand>
        <name>oxaloacetate</name>
        <dbReference type="ChEBI" id="CHEBI:16452"/>
        <note>ligand shared between homodimeric partners</note>
    </ligand>
</feature>
<feature type="binding site" description="in chain B" evidence="2">
    <location>
        <position position="451"/>
    </location>
    <ligand>
        <name>oxaloacetate</name>
        <dbReference type="ChEBI" id="CHEBI:16452"/>
        <note>ligand shared between homodimeric partners</note>
    </ligand>
</feature>
<accession>Q0GNE1</accession>
<protein>
    <recommendedName>
        <fullName>Citrate synthase, mitochondrial</fullName>
        <ecNumber>2.3.3.1</ecNumber>
    </recommendedName>
    <alternativeName>
        <fullName>Citrate (Si)-synthase</fullName>
    </alternativeName>
</protein>